<reference key="1">
    <citation type="journal article" date="2009" name="PLoS ONE">
        <title>Genome sequence of the pathogenic intestinal spirochete Brachyspira hyodysenteriae reveals adaptations to its lifestyle in the porcine large intestine.</title>
        <authorList>
            <person name="Bellgard M.I."/>
            <person name="Wanchanthuek P."/>
            <person name="La T."/>
            <person name="Ryan K."/>
            <person name="Moolhuijzen P."/>
            <person name="Albertyn Z."/>
            <person name="Shaban B."/>
            <person name="Motro Y."/>
            <person name="Dunn D.S."/>
            <person name="Schibeci D."/>
            <person name="Hunter A."/>
            <person name="Barrero R."/>
            <person name="Phillips N.D."/>
            <person name="Hampson D.J."/>
        </authorList>
    </citation>
    <scope>NUCLEOTIDE SEQUENCE [LARGE SCALE GENOMIC DNA]</scope>
    <source>
        <strain>ATCC 49526 / WA1</strain>
    </source>
</reference>
<proteinExistence type="inferred from homology"/>
<gene>
    <name evidence="1" type="primary">pyrB</name>
    <name type="ordered locus">BHWA1_00046</name>
</gene>
<accession>C0QVX1</accession>
<comment type="function">
    <text evidence="1">Catalyzes the condensation of carbamoyl phosphate and aspartate to form carbamoyl aspartate and inorganic phosphate, the committed step in the de novo pyrimidine nucleotide biosynthesis pathway.</text>
</comment>
<comment type="catalytic activity">
    <reaction evidence="1">
        <text>carbamoyl phosphate + L-aspartate = N-carbamoyl-L-aspartate + phosphate + H(+)</text>
        <dbReference type="Rhea" id="RHEA:20013"/>
        <dbReference type="ChEBI" id="CHEBI:15378"/>
        <dbReference type="ChEBI" id="CHEBI:29991"/>
        <dbReference type="ChEBI" id="CHEBI:32814"/>
        <dbReference type="ChEBI" id="CHEBI:43474"/>
        <dbReference type="ChEBI" id="CHEBI:58228"/>
        <dbReference type="EC" id="2.1.3.2"/>
    </reaction>
</comment>
<comment type="pathway">
    <text evidence="1">Pyrimidine metabolism; UMP biosynthesis via de novo pathway; (S)-dihydroorotate from bicarbonate: step 2/3.</text>
</comment>
<comment type="subunit">
    <text evidence="1">Heterododecamer (2C3:3R2) of six catalytic PyrB chains organized as two trimers (C3), and six regulatory PyrI chains organized as three dimers (R2).</text>
</comment>
<comment type="similarity">
    <text evidence="1">Belongs to the aspartate/ornithine carbamoyltransferase superfamily. ATCase family.</text>
</comment>
<keyword id="KW-0665">Pyrimidine biosynthesis</keyword>
<keyword id="KW-0808">Transferase</keyword>
<evidence type="ECO:0000255" key="1">
    <source>
        <dbReference type="HAMAP-Rule" id="MF_00001"/>
    </source>
</evidence>
<feature type="chain" id="PRO_1000201585" description="Aspartate carbamoyltransferase catalytic subunit">
    <location>
        <begin position="1"/>
        <end position="359"/>
    </location>
</feature>
<feature type="binding site" evidence="1">
    <location>
        <position position="52"/>
    </location>
    <ligand>
        <name>carbamoyl phosphate</name>
        <dbReference type="ChEBI" id="CHEBI:58228"/>
    </ligand>
</feature>
<feature type="binding site" evidence="1">
    <location>
        <position position="53"/>
    </location>
    <ligand>
        <name>carbamoyl phosphate</name>
        <dbReference type="ChEBI" id="CHEBI:58228"/>
    </ligand>
</feature>
<feature type="binding site" evidence="1">
    <location>
        <position position="81"/>
    </location>
    <ligand>
        <name>L-aspartate</name>
        <dbReference type="ChEBI" id="CHEBI:29991"/>
    </ligand>
</feature>
<feature type="binding site" evidence="1">
    <location>
        <position position="102"/>
    </location>
    <ligand>
        <name>carbamoyl phosphate</name>
        <dbReference type="ChEBI" id="CHEBI:58228"/>
    </ligand>
</feature>
<feature type="binding site" evidence="1">
    <location>
        <position position="130"/>
    </location>
    <ligand>
        <name>carbamoyl phosphate</name>
        <dbReference type="ChEBI" id="CHEBI:58228"/>
    </ligand>
</feature>
<feature type="binding site" evidence="1">
    <location>
        <position position="133"/>
    </location>
    <ligand>
        <name>carbamoyl phosphate</name>
        <dbReference type="ChEBI" id="CHEBI:58228"/>
    </ligand>
</feature>
<feature type="binding site" evidence="1">
    <location>
        <position position="163"/>
    </location>
    <ligand>
        <name>L-aspartate</name>
        <dbReference type="ChEBI" id="CHEBI:29991"/>
    </ligand>
</feature>
<feature type="binding site" evidence="1">
    <location>
        <position position="224"/>
    </location>
    <ligand>
        <name>L-aspartate</name>
        <dbReference type="ChEBI" id="CHEBI:29991"/>
    </ligand>
</feature>
<feature type="binding site" evidence="1">
    <location>
        <position position="264"/>
    </location>
    <ligand>
        <name>carbamoyl phosphate</name>
        <dbReference type="ChEBI" id="CHEBI:58228"/>
    </ligand>
</feature>
<feature type="binding site" evidence="1">
    <location>
        <position position="265"/>
    </location>
    <ligand>
        <name>carbamoyl phosphate</name>
        <dbReference type="ChEBI" id="CHEBI:58228"/>
    </ligand>
</feature>
<organism>
    <name type="scientific">Brachyspira hyodysenteriae (strain ATCC 49526 / WA1)</name>
    <dbReference type="NCBI Taxonomy" id="565034"/>
    <lineage>
        <taxon>Bacteria</taxon>
        <taxon>Pseudomonadati</taxon>
        <taxon>Spirochaetota</taxon>
        <taxon>Spirochaetia</taxon>
        <taxon>Brachyspirales</taxon>
        <taxon>Brachyspiraceae</taxon>
        <taxon>Brachyspira</taxon>
    </lineage>
</organism>
<protein>
    <recommendedName>
        <fullName evidence="1">Aspartate carbamoyltransferase catalytic subunit</fullName>
        <ecNumber evidence="1">2.1.3.2</ecNumber>
    </recommendedName>
    <alternativeName>
        <fullName evidence="1">Aspartate transcarbamylase</fullName>
        <shortName evidence="1">ATCase</shortName>
    </alternativeName>
</protein>
<sequence>MRNFISIKELSKEEVIEVLDVAKELDNADSKERRKIMDGMIMTSIFFEPSTRTRLSFTSAAYRLGCKELGFDNPEQSSVKKGESLRDTIIMVSAYSDIIVMRHSIDGAAKFAEEVTNCPIINAGDGANEHPSQTLLDLYTLREELGTIENQKVAFVGDTRYGRTVHSLVDGLMMFNGQFYFISPDVIQIPDYILKELDNANIKYKKLSNYEEVLKEIDCLYMTRVQRERFDDINEYEEVKHAFRISKDNIVGKCKDDMIILHPLPRVDEINIDLDDTKYAKYFIQARNGVPTRMAMMALATDAIKSKVKRKEMNYEVVENKEVVCPNNKCVTHFEETKNRVVKKGYGDFCYYCNREIGK</sequence>
<dbReference type="EC" id="2.1.3.2" evidence="1"/>
<dbReference type="EMBL" id="CP001357">
    <property type="protein sequence ID" value="ACN82549.1"/>
    <property type="molecule type" value="Genomic_DNA"/>
</dbReference>
<dbReference type="RefSeq" id="WP_012669602.1">
    <property type="nucleotide sequence ID" value="NC_012225.1"/>
</dbReference>
<dbReference type="SMR" id="C0QVX1"/>
<dbReference type="STRING" id="565034.BHWA1_00046"/>
<dbReference type="GeneID" id="63963839"/>
<dbReference type="KEGG" id="bhy:BHWA1_00046"/>
<dbReference type="eggNOG" id="COG0540">
    <property type="taxonomic scope" value="Bacteria"/>
</dbReference>
<dbReference type="HOGENOM" id="CLU_043846_1_2_12"/>
<dbReference type="UniPathway" id="UPA00070">
    <property type="reaction ID" value="UER00116"/>
</dbReference>
<dbReference type="Proteomes" id="UP000001803">
    <property type="component" value="Chromosome"/>
</dbReference>
<dbReference type="GO" id="GO:0005829">
    <property type="term" value="C:cytosol"/>
    <property type="evidence" value="ECO:0007669"/>
    <property type="project" value="TreeGrafter"/>
</dbReference>
<dbReference type="GO" id="GO:0016597">
    <property type="term" value="F:amino acid binding"/>
    <property type="evidence" value="ECO:0007669"/>
    <property type="project" value="InterPro"/>
</dbReference>
<dbReference type="GO" id="GO:0004070">
    <property type="term" value="F:aspartate carbamoyltransferase activity"/>
    <property type="evidence" value="ECO:0007669"/>
    <property type="project" value="UniProtKB-UniRule"/>
</dbReference>
<dbReference type="GO" id="GO:0006207">
    <property type="term" value="P:'de novo' pyrimidine nucleobase biosynthetic process"/>
    <property type="evidence" value="ECO:0007669"/>
    <property type="project" value="InterPro"/>
</dbReference>
<dbReference type="GO" id="GO:0044205">
    <property type="term" value="P:'de novo' UMP biosynthetic process"/>
    <property type="evidence" value="ECO:0007669"/>
    <property type="project" value="UniProtKB-UniRule"/>
</dbReference>
<dbReference type="GO" id="GO:0006520">
    <property type="term" value="P:amino acid metabolic process"/>
    <property type="evidence" value="ECO:0007669"/>
    <property type="project" value="InterPro"/>
</dbReference>
<dbReference type="FunFam" id="3.40.50.1370:FF:000002">
    <property type="entry name" value="Aspartate carbamoyltransferase 2"/>
    <property type="match status" value="1"/>
</dbReference>
<dbReference type="Gene3D" id="3.40.50.1370">
    <property type="entry name" value="Aspartate/ornithine carbamoyltransferase"/>
    <property type="match status" value="2"/>
</dbReference>
<dbReference type="HAMAP" id="MF_00001">
    <property type="entry name" value="Asp_carb_tr"/>
    <property type="match status" value="1"/>
</dbReference>
<dbReference type="InterPro" id="IPR006132">
    <property type="entry name" value="Asp/Orn_carbamoyltranf_P-bd"/>
</dbReference>
<dbReference type="InterPro" id="IPR006130">
    <property type="entry name" value="Asp/Orn_carbamoylTrfase"/>
</dbReference>
<dbReference type="InterPro" id="IPR036901">
    <property type="entry name" value="Asp/Orn_carbamoylTrfase_sf"/>
</dbReference>
<dbReference type="InterPro" id="IPR002082">
    <property type="entry name" value="Asp_carbamoyltransf"/>
</dbReference>
<dbReference type="InterPro" id="IPR006131">
    <property type="entry name" value="Asp_carbamoyltransf_Asp/Orn-bd"/>
</dbReference>
<dbReference type="InterPro" id="IPR036792">
    <property type="entry name" value="Asp_carbatrfase_reg_C_sf"/>
</dbReference>
<dbReference type="NCBIfam" id="TIGR00670">
    <property type="entry name" value="asp_carb_tr"/>
    <property type="match status" value="1"/>
</dbReference>
<dbReference type="NCBIfam" id="NF002032">
    <property type="entry name" value="PRK00856.1"/>
    <property type="match status" value="1"/>
</dbReference>
<dbReference type="PANTHER" id="PTHR45753:SF6">
    <property type="entry name" value="ASPARTATE CARBAMOYLTRANSFERASE"/>
    <property type="match status" value="1"/>
</dbReference>
<dbReference type="PANTHER" id="PTHR45753">
    <property type="entry name" value="ORNITHINE CARBAMOYLTRANSFERASE, MITOCHONDRIAL"/>
    <property type="match status" value="1"/>
</dbReference>
<dbReference type="Pfam" id="PF00185">
    <property type="entry name" value="OTCace"/>
    <property type="match status" value="1"/>
</dbReference>
<dbReference type="Pfam" id="PF02729">
    <property type="entry name" value="OTCace_N"/>
    <property type="match status" value="1"/>
</dbReference>
<dbReference type="PRINTS" id="PR00100">
    <property type="entry name" value="AOTCASE"/>
</dbReference>
<dbReference type="PRINTS" id="PR00101">
    <property type="entry name" value="ATCASE"/>
</dbReference>
<dbReference type="SUPFAM" id="SSF57825">
    <property type="entry name" value="Aspartate carbamoyltransferase, Regulatory-chain, C-terminal domain"/>
    <property type="match status" value="1"/>
</dbReference>
<dbReference type="SUPFAM" id="SSF53671">
    <property type="entry name" value="Aspartate/ornithine carbamoyltransferase"/>
    <property type="match status" value="1"/>
</dbReference>
<dbReference type="PROSITE" id="PS00097">
    <property type="entry name" value="CARBAMOYLTRANSFERASE"/>
    <property type="match status" value="1"/>
</dbReference>
<name>PYRB_BRAHW</name>